<sequence>MMTQANAYFYNGADVALLNGQYTDVFSLLGMHTSEDGKSLIVRCFLRNALKVDVISIKDGRRVAGLEKVNDAGLFAGTMGRRVKPFLYLLRIQYPLSQIEIVDPYQFGPLLNADDLYLFGEGSAERAYEFLGANWRDVEGIEGVHFCVWAPNAKRVSVVGDFNHWDDTRHVMRQHMANGLWEIFLPNVAEGAHYKFDLVHPNGERHAKSDPMATQMECAPHNASIVPKKSKHSWKDTLWMNKRAVTAWHKAPMAIYEVHLGSWRRKGDNGEQYLDYQDLIEQLIPYVKAQSFTHIELMPISEYPFDGSWGYQPVGLYAPTHRFGDANGLKAFVDACHQADIGVVLDWVAAHFPKDPHGLVRFDGTCLYEHEDPRKGTHPDWDTLIYNYGRGEVRSFLLSNACYWLREFHFDGLRIDAVSSMLYLDYSREPGQWLPNAYGGRENLEAISFLQMLNQRLYQAFPGICMIAEESTAFAGVTKPTDHHGLGFGFKWNMGWMNDSLSYLSRDPIYRQYHHHQLTFSLMYAYTEQFMLSVSHDEVVHGKGSLLHKIPGDDWQKFATLRAYYGFMWGHPGKKLLFMGSEFAQRDEWDHNHSLDWHLLAFEPHQGVQRWLKDLNQLYQGMSALSVLDYQPAGFRWLDCDNGSASIFTFVRYGLAGDAPLVFVINMTPSVHHGFRIGLPQAGDFCEYLNSDSYLYGGSNQGNAGLVVAQNQSWQGMESSALITVPPLSCLVLGPVANQVEAKRR</sequence>
<feature type="chain" id="PRO_1000045000" description="1,4-alpha-glucan branching enzyme GlgB">
    <location>
        <begin position="1"/>
        <end position="745"/>
    </location>
</feature>
<feature type="active site" description="Nucleophile" evidence="1">
    <location>
        <position position="416"/>
    </location>
</feature>
<feature type="active site" description="Proton donor" evidence="1">
    <location>
        <position position="469"/>
    </location>
</feature>
<accession>A1RLX8</accession>
<evidence type="ECO:0000255" key="1">
    <source>
        <dbReference type="HAMAP-Rule" id="MF_00685"/>
    </source>
</evidence>
<gene>
    <name evidence="1" type="primary">glgB</name>
    <name type="ordered locus">Sputw3181_2856</name>
</gene>
<organism>
    <name type="scientific">Shewanella sp. (strain W3-18-1)</name>
    <dbReference type="NCBI Taxonomy" id="351745"/>
    <lineage>
        <taxon>Bacteria</taxon>
        <taxon>Pseudomonadati</taxon>
        <taxon>Pseudomonadota</taxon>
        <taxon>Gammaproteobacteria</taxon>
        <taxon>Alteromonadales</taxon>
        <taxon>Shewanellaceae</taxon>
        <taxon>Shewanella</taxon>
    </lineage>
</organism>
<comment type="function">
    <text evidence="1">Catalyzes the formation of the alpha-1,6-glucosidic linkages in glycogen by scission of a 1,4-alpha-linked oligosaccharide from growing alpha-1,4-glucan chains and the subsequent attachment of the oligosaccharide to the alpha-1,6 position.</text>
</comment>
<comment type="catalytic activity">
    <reaction evidence="1">
        <text>Transfers a segment of a (1-&gt;4)-alpha-D-glucan chain to a primary hydroxy group in a similar glucan chain.</text>
        <dbReference type="EC" id="2.4.1.18"/>
    </reaction>
</comment>
<comment type="pathway">
    <text evidence="1">Glycan biosynthesis; glycogen biosynthesis.</text>
</comment>
<comment type="subunit">
    <text evidence="1">Monomer.</text>
</comment>
<comment type="similarity">
    <text evidence="1">Belongs to the glycosyl hydrolase 13 family. GlgB subfamily.</text>
</comment>
<protein>
    <recommendedName>
        <fullName evidence="1">1,4-alpha-glucan branching enzyme GlgB</fullName>
        <ecNumber evidence="1">2.4.1.18</ecNumber>
    </recommendedName>
    <alternativeName>
        <fullName evidence="1">1,4-alpha-D-glucan:1,4-alpha-D-glucan 6-glucosyl-transferase</fullName>
    </alternativeName>
    <alternativeName>
        <fullName evidence="1">Alpha-(1-&gt;4)-glucan branching enzyme</fullName>
    </alternativeName>
    <alternativeName>
        <fullName evidence="1">Glycogen branching enzyme</fullName>
        <shortName evidence="1">BE</shortName>
    </alternativeName>
</protein>
<proteinExistence type="inferred from homology"/>
<name>GLGB_SHESW</name>
<keyword id="KW-0119">Carbohydrate metabolism</keyword>
<keyword id="KW-0320">Glycogen biosynthesis</keyword>
<keyword id="KW-0321">Glycogen metabolism</keyword>
<keyword id="KW-0328">Glycosyltransferase</keyword>
<keyword id="KW-0808">Transferase</keyword>
<dbReference type="EC" id="2.4.1.18" evidence="1"/>
<dbReference type="EMBL" id="CP000503">
    <property type="protein sequence ID" value="ABM25673.1"/>
    <property type="molecule type" value="Genomic_DNA"/>
</dbReference>
<dbReference type="RefSeq" id="WP_011790128.1">
    <property type="nucleotide sequence ID" value="NC_008750.1"/>
</dbReference>
<dbReference type="SMR" id="A1RLX8"/>
<dbReference type="CAZy" id="CBM48">
    <property type="family name" value="Carbohydrate-Binding Module Family 48"/>
</dbReference>
<dbReference type="CAZy" id="GH13">
    <property type="family name" value="Glycoside Hydrolase Family 13"/>
</dbReference>
<dbReference type="KEGG" id="shw:Sputw3181_2856"/>
<dbReference type="HOGENOM" id="CLU_004245_3_2_6"/>
<dbReference type="UniPathway" id="UPA00164"/>
<dbReference type="Proteomes" id="UP000002597">
    <property type="component" value="Chromosome"/>
</dbReference>
<dbReference type="GO" id="GO:0005829">
    <property type="term" value="C:cytosol"/>
    <property type="evidence" value="ECO:0007669"/>
    <property type="project" value="TreeGrafter"/>
</dbReference>
<dbReference type="GO" id="GO:0003844">
    <property type="term" value="F:1,4-alpha-glucan branching enzyme activity"/>
    <property type="evidence" value="ECO:0007669"/>
    <property type="project" value="UniProtKB-UniRule"/>
</dbReference>
<dbReference type="GO" id="GO:0043169">
    <property type="term" value="F:cation binding"/>
    <property type="evidence" value="ECO:0007669"/>
    <property type="project" value="InterPro"/>
</dbReference>
<dbReference type="GO" id="GO:0004553">
    <property type="term" value="F:hydrolase activity, hydrolyzing O-glycosyl compounds"/>
    <property type="evidence" value="ECO:0007669"/>
    <property type="project" value="InterPro"/>
</dbReference>
<dbReference type="GO" id="GO:0005978">
    <property type="term" value="P:glycogen biosynthetic process"/>
    <property type="evidence" value="ECO:0007669"/>
    <property type="project" value="UniProtKB-UniRule"/>
</dbReference>
<dbReference type="CDD" id="cd11322">
    <property type="entry name" value="AmyAc_Glg_BE"/>
    <property type="match status" value="1"/>
</dbReference>
<dbReference type="CDD" id="cd02855">
    <property type="entry name" value="E_set_GBE_prok_N"/>
    <property type="match status" value="1"/>
</dbReference>
<dbReference type="FunFam" id="2.60.40.10:FF:000169">
    <property type="entry name" value="1,4-alpha-glucan branching enzyme GlgB"/>
    <property type="match status" value="1"/>
</dbReference>
<dbReference type="FunFam" id="2.60.40.1180:FF:000002">
    <property type="entry name" value="1,4-alpha-glucan branching enzyme GlgB"/>
    <property type="match status" value="1"/>
</dbReference>
<dbReference type="FunFam" id="3.20.20.80:FF:000003">
    <property type="entry name" value="1,4-alpha-glucan branching enzyme GlgB"/>
    <property type="match status" value="1"/>
</dbReference>
<dbReference type="Gene3D" id="3.20.20.80">
    <property type="entry name" value="Glycosidases"/>
    <property type="match status" value="1"/>
</dbReference>
<dbReference type="Gene3D" id="2.60.40.1180">
    <property type="entry name" value="Golgi alpha-mannosidase II"/>
    <property type="match status" value="1"/>
</dbReference>
<dbReference type="Gene3D" id="2.60.40.10">
    <property type="entry name" value="Immunoglobulins"/>
    <property type="match status" value="1"/>
</dbReference>
<dbReference type="HAMAP" id="MF_00685">
    <property type="entry name" value="GlgB"/>
    <property type="match status" value="1"/>
</dbReference>
<dbReference type="InterPro" id="IPR006048">
    <property type="entry name" value="A-amylase/branching_C"/>
</dbReference>
<dbReference type="InterPro" id="IPR037439">
    <property type="entry name" value="Branching_enzy"/>
</dbReference>
<dbReference type="InterPro" id="IPR006407">
    <property type="entry name" value="GlgB"/>
</dbReference>
<dbReference type="InterPro" id="IPR054169">
    <property type="entry name" value="GlgB_N"/>
</dbReference>
<dbReference type="InterPro" id="IPR044143">
    <property type="entry name" value="GlgB_N_E_set_prok"/>
</dbReference>
<dbReference type="InterPro" id="IPR006047">
    <property type="entry name" value="Glyco_hydro_13_cat_dom"/>
</dbReference>
<dbReference type="InterPro" id="IPR004193">
    <property type="entry name" value="Glyco_hydro_13_N"/>
</dbReference>
<dbReference type="InterPro" id="IPR013780">
    <property type="entry name" value="Glyco_hydro_b"/>
</dbReference>
<dbReference type="InterPro" id="IPR017853">
    <property type="entry name" value="Glycoside_hydrolase_SF"/>
</dbReference>
<dbReference type="InterPro" id="IPR013783">
    <property type="entry name" value="Ig-like_fold"/>
</dbReference>
<dbReference type="InterPro" id="IPR014756">
    <property type="entry name" value="Ig_E-set"/>
</dbReference>
<dbReference type="NCBIfam" id="TIGR01515">
    <property type="entry name" value="branching_enzym"/>
    <property type="match status" value="1"/>
</dbReference>
<dbReference type="NCBIfam" id="NF003811">
    <property type="entry name" value="PRK05402.1"/>
    <property type="match status" value="1"/>
</dbReference>
<dbReference type="NCBIfam" id="NF008967">
    <property type="entry name" value="PRK12313.1"/>
    <property type="match status" value="1"/>
</dbReference>
<dbReference type="PANTHER" id="PTHR43651">
    <property type="entry name" value="1,4-ALPHA-GLUCAN-BRANCHING ENZYME"/>
    <property type="match status" value="1"/>
</dbReference>
<dbReference type="PANTHER" id="PTHR43651:SF3">
    <property type="entry name" value="1,4-ALPHA-GLUCAN-BRANCHING ENZYME"/>
    <property type="match status" value="1"/>
</dbReference>
<dbReference type="Pfam" id="PF00128">
    <property type="entry name" value="Alpha-amylase"/>
    <property type="match status" value="1"/>
</dbReference>
<dbReference type="Pfam" id="PF02806">
    <property type="entry name" value="Alpha-amylase_C"/>
    <property type="match status" value="1"/>
</dbReference>
<dbReference type="Pfam" id="PF02922">
    <property type="entry name" value="CBM_48"/>
    <property type="match status" value="1"/>
</dbReference>
<dbReference type="Pfam" id="PF22019">
    <property type="entry name" value="GlgB_N"/>
    <property type="match status" value="1"/>
</dbReference>
<dbReference type="PIRSF" id="PIRSF000463">
    <property type="entry name" value="GlgB"/>
    <property type="match status" value="1"/>
</dbReference>
<dbReference type="SMART" id="SM00642">
    <property type="entry name" value="Aamy"/>
    <property type="match status" value="1"/>
</dbReference>
<dbReference type="SUPFAM" id="SSF51445">
    <property type="entry name" value="(Trans)glycosidases"/>
    <property type="match status" value="1"/>
</dbReference>
<dbReference type="SUPFAM" id="SSF81296">
    <property type="entry name" value="E set domains"/>
    <property type="match status" value="1"/>
</dbReference>
<dbReference type="SUPFAM" id="SSF51011">
    <property type="entry name" value="Glycosyl hydrolase domain"/>
    <property type="match status" value="1"/>
</dbReference>
<reference key="1">
    <citation type="submission" date="2006-12" db="EMBL/GenBank/DDBJ databases">
        <title>Complete sequence of Shewanella sp. W3-18-1.</title>
        <authorList>
            <consortium name="US DOE Joint Genome Institute"/>
            <person name="Copeland A."/>
            <person name="Lucas S."/>
            <person name="Lapidus A."/>
            <person name="Barry K."/>
            <person name="Detter J.C."/>
            <person name="Glavina del Rio T."/>
            <person name="Hammon N."/>
            <person name="Israni S."/>
            <person name="Dalin E."/>
            <person name="Tice H."/>
            <person name="Pitluck S."/>
            <person name="Chain P."/>
            <person name="Malfatti S."/>
            <person name="Shin M."/>
            <person name="Vergez L."/>
            <person name="Schmutz J."/>
            <person name="Larimer F."/>
            <person name="Land M."/>
            <person name="Hauser L."/>
            <person name="Kyrpides N."/>
            <person name="Lykidis A."/>
            <person name="Tiedje J."/>
            <person name="Richardson P."/>
        </authorList>
    </citation>
    <scope>NUCLEOTIDE SEQUENCE [LARGE SCALE GENOMIC DNA]</scope>
    <source>
        <strain>W3-18-1</strain>
    </source>
</reference>